<keyword id="KW-0687">Ribonucleoprotein</keyword>
<keyword id="KW-0689">Ribosomal protein</keyword>
<keyword id="KW-0694">RNA-binding</keyword>
<keyword id="KW-0699">rRNA-binding</keyword>
<evidence type="ECO:0000255" key="1">
    <source>
        <dbReference type="HAMAP-Rule" id="MF_01307"/>
    </source>
</evidence>
<evidence type="ECO:0000305" key="2"/>
<gene>
    <name evidence="1" type="primary">rpsE</name>
    <name type="ordered locus">lpp0411</name>
</gene>
<accession>Q5X842</accession>
<organism>
    <name type="scientific">Legionella pneumophila (strain Paris)</name>
    <dbReference type="NCBI Taxonomy" id="297246"/>
    <lineage>
        <taxon>Bacteria</taxon>
        <taxon>Pseudomonadati</taxon>
        <taxon>Pseudomonadota</taxon>
        <taxon>Gammaproteobacteria</taxon>
        <taxon>Legionellales</taxon>
        <taxon>Legionellaceae</taxon>
        <taxon>Legionella</taxon>
    </lineage>
</organism>
<sequence length="168" mass="17697">MSFDELPKSDGYQEKLVSVTRTAKVVKGGRVFGFAVLVVVGDGKGKVGFGRGKAREVPIAIQKAMDQAKKNMVYIPLSGTTIFHEITWNYGASKVFMKPASEGTGIIAGGAMRAVLEVLGVQNILAKSIGSTNPSNIVRATIGALTHIGTPDYVAAKRGKTVEEVMAG</sequence>
<comment type="function">
    <text evidence="1">With S4 and S12 plays an important role in translational accuracy.</text>
</comment>
<comment type="function">
    <text evidence="1">Located at the back of the 30S subunit body where it stabilizes the conformation of the head with respect to the body.</text>
</comment>
<comment type="subunit">
    <text evidence="1">Part of the 30S ribosomal subunit. Contacts proteins S4 and S8.</text>
</comment>
<comment type="domain">
    <text>The N-terminal domain interacts with the head of the 30S subunit; the C-terminal domain interacts with the body and contacts protein S4. The interaction surface between S4 and S5 is involved in control of translational fidelity.</text>
</comment>
<comment type="similarity">
    <text evidence="1">Belongs to the universal ribosomal protein uS5 family.</text>
</comment>
<name>RS5_LEGPA</name>
<protein>
    <recommendedName>
        <fullName evidence="1">Small ribosomal subunit protein uS5</fullName>
    </recommendedName>
    <alternativeName>
        <fullName evidence="2">30S ribosomal protein S5</fullName>
    </alternativeName>
</protein>
<proteinExistence type="inferred from homology"/>
<feature type="chain" id="PRO_0000131532" description="Small ribosomal subunit protein uS5">
    <location>
        <begin position="1"/>
        <end position="168"/>
    </location>
</feature>
<feature type="domain" description="S5 DRBM" evidence="1">
    <location>
        <begin position="12"/>
        <end position="75"/>
    </location>
</feature>
<reference key="1">
    <citation type="journal article" date="2004" name="Nat. Genet.">
        <title>Evidence in the Legionella pneumophila genome for exploitation of host cell functions and high genome plasticity.</title>
        <authorList>
            <person name="Cazalet C."/>
            <person name="Rusniok C."/>
            <person name="Brueggemann H."/>
            <person name="Zidane N."/>
            <person name="Magnier A."/>
            <person name="Ma L."/>
            <person name="Tichit M."/>
            <person name="Jarraud S."/>
            <person name="Bouchier C."/>
            <person name="Vandenesch F."/>
            <person name="Kunst F."/>
            <person name="Etienne J."/>
            <person name="Glaser P."/>
            <person name="Buchrieser C."/>
        </authorList>
    </citation>
    <scope>NUCLEOTIDE SEQUENCE [LARGE SCALE GENOMIC DNA]</scope>
    <source>
        <strain>Paris</strain>
    </source>
</reference>
<dbReference type="EMBL" id="CR628336">
    <property type="protein sequence ID" value="CAH11559.1"/>
    <property type="molecule type" value="Genomic_DNA"/>
</dbReference>
<dbReference type="RefSeq" id="WP_010946095.1">
    <property type="nucleotide sequence ID" value="NC_006368.1"/>
</dbReference>
<dbReference type="SMR" id="Q5X842"/>
<dbReference type="GeneID" id="57034349"/>
<dbReference type="KEGG" id="lpp:lpp0411"/>
<dbReference type="LegioList" id="lpp0411"/>
<dbReference type="HOGENOM" id="CLU_065898_2_2_6"/>
<dbReference type="GO" id="GO:0015935">
    <property type="term" value="C:small ribosomal subunit"/>
    <property type="evidence" value="ECO:0007669"/>
    <property type="project" value="InterPro"/>
</dbReference>
<dbReference type="GO" id="GO:0019843">
    <property type="term" value="F:rRNA binding"/>
    <property type="evidence" value="ECO:0007669"/>
    <property type="project" value="UniProtKB-UniRule"/>
</dbReference>
<dbReference type="GO" id="GO:0003735">
    <property type="term" value="F:structural constituent of ribosome"/>
    <property type="evidence" value="ECO:0007669"/>
    <property type="project" value="InterPro"/>
</dbReference>
<dbReference type="GO" id="GO:0006412">
    <property type="term" value="P:translation"/>
    <property type="evidence" value="ECO:0007669"/>
    <property type="project" value="UniProtKB-UniRule"/>
</dbReference>
<dbReference type="FunFam" id="3.30.160.20:FF:000001">
    <property type="entry name" value="30S ribosomal protein S5"/>
    <property type="match status" value="1"/>
</dbReference>
<dbReference type="FunFam" id="3.30.230.10:FF:000002">
    <property type="entry name" value="30S ribosomal protein S5"/>
    <property type="match status" value="1"/>
</dbReference>
<dbReference type="Gene3D" id="3.30.160.20">
    <property type="match status" value="1"/>
</dbReference>
<dbReference type="Gene3D" id="3.30.230.10">
    <property type="match status" value="1"/>
</dbReference>
<dbReference type="HAMAP" id="MF_01307_B">
    <property type="entry name" value="Ribosomal_uS5_B"/>
    <property type="match status" value="1"/>
</dbReference>
<dbReference type="InterPro" id="IPR020568">
    <property type="entry name" value="Ribosomal_Su5_D2-typ_SF"/>
</dbReference>
<dbReference type="InterPro" id="IPR000851">
    <property type="entry name" value="Ribosomal_uS5"/>
</dbReference>
<dbReference type="InterPro" id="IPR005712">
    <property type="entry name" value="Ribosomal_uS5_bac-type"/>
</dbReference>
<dbReference type="InterPro" id="IPR005324">
    <property type="entry name" value="Ribosomal_uS5_C"/>
</dbReference>
<dbReference type="InterPro" id="IPR013810">
    <property type="entry name" value="Ribosomal_uS5_N"/>
</dbReference>
<dbReference type="InterPro" id="IPR018192">
    <property type="entry name" value="Ribosomal_uS5_N_CS"/>
</dbReference>
<dbReference type="InterPro" id="IPR014721">
    <property type="entry name" value="Ribsml_uS5_D2-typ_fold_subgr"/>
</dbReference>
<dbReference type="NCBIfam" id="TIGR01021">
    <property type="entry name" value="rpsE_bact"/>
    <property type="match status" value="1"/>
</dbReference>
<dbReference type="PANTHER" id="PTHR48277">
    <property type="entry name" value="MITOCHONDRIAL RIBOSOMAL PROTEIN S5"/>
    <property type="match status" value="1"/>
</dbReference>
<dbReference type="PANTHER" id="PTHR48277:SF1">
    <property type="entry name" value="MITOCHONDRIAL RIBOSOMAL PROTEIN S5"/>
    <property type="match status" value="1"/>
</dbReference>
<dbReference type="Pfam" id="PF00333">
    <property type="entry name" value="Ribosomal_S5"/>
    <property type="match status" value="1"/>
</dbReference>
<dbReference type="Pfam" id="PF03719">
    <property type="entry name" value="Ribosomal_S5_C"/>
    <property type="match status" value="1"/>
</dbReference>
<dbReference type="SUPFAM" id="SSF54768">
    <property type="entry name" value="dsRNA-binding domain-like"/>
    <property type="match status" value="1"/>
</dbReference>
<dbReference type="SUPFAM" id="SSF54211">
    <property type="entry name" value="Ribosomal protein S5 domain 2-like"/>
    <property type="match status" value="1"/>
</dbReference>
<dbReference type="PROSITE" id="PS00585">
    <property type="entry name" value="RIBOSOMAL_S5"/>
    <property type="match status" value="1"/>
</dbReference>
<dbReference type="PROSITE" id="PS50881">
    <property type="entry name" value="S5_DSRBD"/>
    <property type="match status" value="1"/>
</dbReference>